<evidence type="ECO:0000255" key="1">
    <source>
        <dbReference type="HAMAP-Rule" id="MF_01341"/>
    </source>
</evidence>
<evidence type="ECO:0000256" key="2">
    <source>
        <dbReference type="SAM" id="MobiDB-lite"/>
    </source>
</evidence>
<evidence type="ECO:0000305" key="3"/>
<organism>
    <name type="scientific">Cupriavidus metallidurans (strain ATCC 43123 / DSM 2839 / NBRC 102507 / CH34)</name>
    <name type="common">Ralstonia metallidurans</name>
    <dbReference type="NCBI Taxonomy" id="266264"/>
    <lineage>
        <taxon>Bacteria</taxon>
        <taxon>Pseudomonadati</taxon>
        <taxon>Pseudomonadota</taxon>
        <taxon>Betaproteobacteria</taxon>
        <taxon>Burkholderiales</taxon>
        <taxon>Burkholderiaceae</taxon>
        <taxon>Cupriavidus</taxon>
    </lineage>
</organism>
<feature type="chain" id="PRO_0000251545" description="Large ribosomal subunit protein uL15">
    <location>
        <begin position="1"/>
        <end position="144"/>
    </location>
</feature>
<feature type="region of interest" description="Disordered" evidence="2">
    <location>
        <begin position="1"/>
        <end position="48"/>
    </location>
</feature>
<feature type="compositionally biased region" description="Gly residues" evidence="2">
    <location>
        <begin position="21"/>
        <end position="31"/>
    </location>
</feature>
<protein>
    <recommendedName>
        <fullName evidence="1">Large ribosomal subunit protein uL15</fullName>
    </recommendedName>
    <alternativeName>
        <fullName evidence="3">50S ribosomal protein L15</fullName>
    </alternativeName>
</protein>
<name>RL15_CUPMC</name>
<dbReference type="EMBL" id="CP000352">
    <property type="protein sequence ID" value="ABF10170.1"/>
    <property type="molecule type" value="Genomic_DNA"/>
</dbReference>
<dbReference type="RefSeq" id="WP_008642954.1">
    <property type="nucleotide sequence ID" value="NC_007973.1"/>
</dbReference>
<dbReference type="SMR" id="Q1LI56"/>
<dbReference type="STRING" id="266264.Rmet_3298"/>
<dbReference type="GeneID" id="60826619"/>
<dbReference type="KEGG" id="rme:Rmet_3298"/>
<dbReference type="eggNOG" id="COG0200">
    <property type="taxonomic scope" value="Bacteria"/>
</dbReference>
<dbReference type="HOGENOM" id="CLU_055188_4_2_4"/>
<dbReference type="Proteomes" id="UP000002429">
    <property type="component" value="Chromosome"/>
</dbReference>
<dbReference type="GO" id="GO:0022625">
    <property type="term" value="C:cytosolic large ribosomal subunit"/>
    <property type="evidence" value="ECO:0007669"/>
    <property type="project" value="TreeGrafter"/>
</dbReference>
<dbReference type="GO" id="GO:0019843">
    <property type="term" value="F:rRNA binding"/>
    <property type="evidence" value="ECO:0007669"/>
    <property type="project" value="UniProtKB-UniRule"/>
</dbReference>
<dbReference type="GO" id="GO:0003735">
    <property type="term" value="F:structural constituent of ribosome"/>
    <property type="evidence" value="ECO:0007669"/>
    <property type="project" value="InterPro"/>
</dbReference>
<dbReference type="GO" id="GO:0006412">
    <property type="term" value="P:translation"/>
    <property type="evidence" value="ECO:0007669"/>
    <property type="project" value="UniProtKB-UniRule"/>
</dbReference>
<dbReference type="Gene3D" id="3.100.10.10">
    <property type="match status" value="1"/>
</dbReference>
<dbReference type="HAMAP" id="MF_01341">
    <property type="entry name" value="Ribosomal_uL15"/>
    <property type="match status" value="1"/>
</dbReference>
<dbReference type="InterPro" id="IPR030878">
    <property type="entry name" value="Ribosomal_uL15"/>
</dbReference>
<dbReference type="InterPro" id="IPR021131">
    <property type="entry name" value="Ribosomal_uL15/eL18"/>
</dbReference>
<dbReference type="InterPro" id="IPR036227">
    <property type="entry name" value="Ribosomal_uL15/eL18_sf"/>
</dbReference>
<dbReference type="InterPro" id="IPR005749">
    <property type="entry name" value="Ribosomal_uL15_bac-type"/>
</dbReference>
<dbReference type="NCBIfam" id="TIGR01071">
    <property type="entry name" value="rplO_bact"/>
    <property type="match status" value="1"/>
</dbReference>
<dbReference type="PANTHER" id="PTHR12934">
    <property type="entry name" value="50S RIBOSOMAL PROTEIN L15"/>
    <property type="match status" value="1"/>
</dbReference>
<dbReference type="PANTHER" id="PTHR12934:SF11">
    <property type="entry name" value="LARGE RIBOSOMAL SUBUNIT PROTEIN UL15M"/>
    <property type="match status" value="1"/>
</dbReference>
<dbReference type="Pfam" id="PF00828">
    <property type="entry name" value="Ribosomal_L27A"/>
    <property type="match status" value="1"/>
</dbReference>
<dbReference type="SUPFAM" id="SSF52080">
    <property type="entry name" value="Ribosomal proteins L15p and L18e"/>
    <property type="match status" value="1"/>
</dbReference>
<reference key="1">
    <citation type="journal article" date="2010" name="PLoS ONE">
        <title>The complete genome sequence of Cupriavidus metallidurans strain CH34, a master survivalist in harsh and anthropogenic environments.</title>
        <authorList>
            <person name="Janssen P.J."/>
            <person name="Van Houdt R."/>
            <person name="Moors H."/>
            <person name="Monsieurs P."/>
            <person name="Morin N."/>
            <person name="Michaux A."/>
            <person name="Benotmane M.A."/>
            <person name="Leys N."/>
            <person name="Vallaeys T."/>
            <person name="Lapidus A."/>
            <person name="Monchy S."/>
            <person name="Medigue C."/>
            <person name="Taghavi S."/>
            <person name="McCorkle S."/>
            <person name="Dunn J."/>
            <person name="van der Lelie D."/>
            <person name="Mergeay M."/>
        </authorList>
    </citation>
    <scope>NUCLEOTIDE SEQUENCE [LARGE SCALE GENOMIC DNA]</scope>
    <source>
        <strain>ATCC 43123 / DSM 2839 / NBRC 102507 / CH34</strain>
    </source>
</reference>
<proteinExistence type="inferred from homology"/>
<gene>
    <name evidence="1" type="primary">rplO</name>
    <name type="ordered locus">Rmet_3298</name>
</gene>
<comment type="function">
    <text evidence="1">Binds to the 23S rRNA.</text>
</comment>
<comment type="subunit">
    <text evidence="1">Part of the 50S ribosomal subunit.</text>
</comment>
<comment type="similarity">
    <text evidence="1">Belongs to the universal ribosomal protein uL15 family.</text>
</comment>
<accession>Q1LI56</accession>
<sequence>MQLNNLKPADGSKHAKRRVGRGIGSGLGKTAGRGHKGQKSRSGGFHKVGFEGGQMPLYRRLPKRGFTSLTKAFTAEVTLRDIERLEAAEVDLLVLKQAGLVGELVKSAKVIKAGELSRKVTIKGLGATAGAKAAIEAAGGQIEA</sequence>
<keyword id="KW-1185">Reference proteome</keyword>
<keyword id="KW-0687">Ribonucleoprotein</keyword>
<keyword id="KW-0689">Ribosomal protein</keyword>
<keyword id="KW-0694">RNA-binding</keyword>
<keyword id="KW-0699">rRNA-binding</keyword>